<sequence>MSSPLEKPQIIAHVQKPVTYTLFDCKWIPCSAKFVCVGNLARGSGVLQVYEIQQGEAKLLQEAEKPKPIKCGTFGASSLQQRYLATGDFGGNLNIWNLEAPDTPVYSAKGHNEIINCIDGVGGVGIGEGAPEIVTGSRDGTVKVWDPRQKDTPVANMEPAAGETKRDCWTVAFGHAYNEQERLVCAGYDNGDIKLFDLRNMSVRWETNIKNGVCSLEFDRKDIVMNKLVATSLEGKFHVFDMRTQHPSKGFASMSEKAHKSTIWQVRHLPQNRDVFMTSGGAGNLHLWKYEYPAQRSRKDSDDVDMGVAGSVSLLQNVTLSTQPISSMDWSPDKKGLCVCTSFDQTVRVLIVTKLNKL</sequence>
<name>DAA10_XENTR</name>
<keyword id="KW-0053">Apoptosis</keyword>
<keyword id="KW-0963">Cytoplasm</keyword>
<keyword id="KW-1185">Reference proteome</keyword>
<keyword id="KW-0677">Repeat</keyword>
<keyword id="KW-0853">WD repeat</keyword>
<reference key="1">
    <citation type="submission" date="2007-03" db="EMBL/GenBank/DDBJ databases">
        <authorList>
            <consortium name="NIH - Xenopus Gene Collection (XGC) project"/>
        </authorList>
    </citation>
    <scope>NUCLEOTIDE SEQUENCE [LARGE SCALE MRNA]</scope>
</reference>
<accession>A4QNE6</accession>
<proteinExistence type="evidence at transcript level"/>
<comment type="function">
    <text evidence="1">Key assembly factor specifically required for the stability of axonemal dynein heavy chains in cytoplasm.</text>
</comment>
<comment type="subunit">
    <text evidence="1 2">Interacts with PIH1D1; the interaction associates DNAAF10 with the R2TP complex (By similarity). Interacts with several dynein axonemal assembly factors (By similarity).</text>
</comment>
<comment type="subcellular location">
    <subcellularLocation>
        <location evidence="1">Dynein axonemal particle</location>
    </subcellularLocation>
</comment>
<organism>
    <name type="scientific">Xenopus tropicalis</name>
    <name type="common">Western clawed frog</name>
    <name type="synonym">Silurana tropicalis</name>
    <dbReference type="NCBI Taxonomy" id="8364"/>
    <lineage>
        <taxon>Eukaryota</taxon>
        <taxon>Metazoa</taxon>
        <taxon>Chordata</taxon>
        <taxon>Craniata</taxon>
        <taxon>Vertebrata</taxon>
        <taxon>Euteleostomi</taxon>
        <taxon>Amphibia</taxon>
        <taxon>Batrachia</taxon>
        <taxon>Anura</taxon>
        <taxon>Pipoidea</taxon>
        <taxon>Pipidae</taxon>
        <taxon>Xenopodinae</taxon>
        <taxon>Xenopus</taxon>
        <taxon>Silurana</taxon>
    </lineage>
</organism>
<gene>
    <name type="primary">dnaaf10</name>
    <name type="synonym">wdr92</name>
</gene>
<evidence type="ECO:0000250" key="1">
    <source>
        <dbReference type="UniProtKB" id="A8J3F6"/>
    </source>
</evidence>
<evidence type="ECO:0000250" key="2">
    <source>
        <dbReference type="UniProtKB" id="Q96MX6"/>
    </source>
</evidence>
<evidence type="ECO:0000305" key="3"/>
<feature type="chain" id="PRO_0000301675" description="Dynein axonemal assembly factor 10">
    <location>
        <begin position="1"/>
        <end position="358"/>
    </location>
</feature>
<feature type="repeat" description="WD 1">
    <location>
        <begin position="64"/>
        <end position="106"/>
    </location>
</feature>
<feature type="repeat" description="WD 2">
    <location>
        <begin position="116"/>
        <end position="155"/>
    </location>
</feature>
<feature type="repeat" description="WD 3">
    <location>
        <begin position="163"/>
        <end position="206"/>
    </location>
</feature>
<feature type="repeat" description="WD 4">
    <location>
        <begin position="208"/>
        <end position="250"/>
    </location>
</feature>
<feature type="repeat" description="WD 5">
    <location>
        <begin position="258"/>
        <end position="298"/>
    </location>
</feature>
<feature type="repeat" description="WD 6">
    <location>
        <begin position="320"/>
        <end position="358"/>
    </location>
</feature>
<dbReference type="EMBL" id="BC135537">
    <property type="protein sequence ID" value="AAI35538.1"/>
    <property type="molecule type" value="mRNA"/>
</dbReference>
<dbReference type="RefSeq" id="NP_001096516.1">
    <property type="nucleotide sequence ID" value="NM_001103046.1"/>
</dbReference>
<dbReference type="SMR" id="A4QNE6"/>
<dbReference type="FunCoup" id="A4QNE6">
    <property type="interactions" value="997"/>
</dbReference>
<dbReference type="STRING" id="8364.ENSXETP00000007920"/>
<dbReference type="PaxDb" id="8364-ENSXETP00000037777"/>
<dbReference type="DNASU" id="100125149"/>
<dbReference type="GeneID" id="100125149"/>
<dbReference type="KEGG" id="xtr:100125149"/>
<dbReference type="AGR" id="Xenbase:XB-GENE-980477"/>
<dbReference type="CTD" id="116143"/>
<dbReference type="Xenbase" id="XB-GENE-980477">
    <property type="gene designation" value="dnaaf10"/>
</dbReference>
<dbReference type="eggNOG" id="ENOG502QRKB">
    <property type="taxonomic scope" value="Eukaryota"/>
</dbReference>
<dbReference type="InParanoid" id="A4QNE6"/>
<dbReference type="OMA" id="CLWKYNY"/>
<dbReference type="OrthoDB" id="10248252at2759"/>
<dbReference type="Proteomes" id="UP000008143">
    <property type="component" value="Chromosome 5"/>
</dbReference>
<dbReference type="GO" id="GO:0120293">
    <property type="term" value="C:dynein axonemal particle"/>
    <property type="evidence" value="ECO:0000250"/>
    <property type="project" value="UniProtKB"/>
</dbReference>
<dbReference type="GO" id="GO:0006915">
    <property type="term" value="P:apoptotic process"/>
    <property type="evidence" value="ECO:0007669"/>
    <property type="project" value="UniProtKB-KW"/>
</dbReference>
<dbReference type="GO" id="GO:0070286">
    <property type="term" value="P:axonemal dynein complex assembly"/>
    <property type="evidence" value="ECO:0000250"/>
    <property type="project" value="UniProtKB"/>
</dbReference>
<dbReference type="FunFam" id="2.130.10.10:FF:000258">
    <property type="entry name" value="WD repeat-containing protein 92"/>
    <property type="match status" value="1"/>
</dbReference>
<dbReference type="Gene3D" id="2.130.10.10">
    <property type="entry name" value="YVTN repeat-like/Quinoprotein amine dehydrogenase"/>
    <property type="match status" value="1"/>
</dbReference>
<dbReference type="InterPro" id="IPR015943">
    <property type="entry name" value="WD40/YVTN_repeat-like_dom_sf"/>
</dbReference>
<dbReference type="InterPro" id="IPR036322">
    <property type="entry name" value="WD40_repeat_dom_sf"/>
</dbReference>
<dbReference type="InterPro" id="IPR001680">
    <property type="entry name" value="WD40_rpt"/>
</dbReference>
<dbReference type="PANTHER" id="PTHR10971">
    <property type="entry name" value="MRNA EXPORT FACTOR AND BUB3"/>
    <property type="match status" value="1"/>
</dbReference>
<dbReference type="Pfam" id="PF00400">
    <property type="entry name" value="WD40"/>
    <property type="match status" value="2"/>
</dbReference>
<dbReference type="SMART" id="SM00320">
    <property type="entry name" value="WD40"/>
    <property type="match status" value="5"/>
</dbReference>
<dbReference type="SUPFAM" id="SSF50978">
    <property type="entry name" value="WD40 repeat-like"/>
    <property type="match status" value="1"/>
</dbReference>
<dbReference type="PROSITE" id="PS50082">
    <property type="entry name" value="WD_REPEATS_2"/>
    <property type="match status" value="1"/>
</dbReference>
<dbReference type="PROSITE" id="PS50294">
    <property type="entry name" value="WD_REPEATS_REGION"/>
    <property type="match status" value="1"/>
</dbReference>
<protein>
    <recommendedName>
        <fullName evidence="3">Dynein axonemal assembly factor 10</fullName>
    </recommendedName>
    <alternativeName>
        <fullName>WD repeat-containing protein 92</fullName>
    </alternativeName>
</protein>